<organism>
    <name type="scientific">Serratia marcescens</name>
    <dbReference type="NCBI Taxonomy" id="615"/>
    <lineage>
        <taxon>Bacteria</taxon>
        <taxon>Pseudomonadati</taxon>
        <taxon>Pseudomonadota</taxon>
        <taxon>Gammaproteobacteria</taxon>
        <taxon>Enterobacterales</taxon>
        <taxon>Yersiniaceae</taxon>
        <taxon>Serratia</taxon>
    </lineage>
</organism>
<name>HLYB_SERMA</name>
<accession>P15321</accession>
<sequence>MIKKITALTLLVSTALSAETLPDSHMMQDMSMGESRRALQDSTREVNQLIEQRRYQQLKQQRLLAEPAAPALPQSAQCLPIAGVYLQGVTLLSPADLSALSGLPEQCISSNDINRLTRELTRLYVQKGYITARVQIVRPNSQGELGLSVTEGFIEKIEGGDRWVNSRLLFPGLEGKPLKLTELDQGLDQANRLQSNTTKLDILPGRQVGGSVIRLRNQHAKPWLITAGTDNYGQKSTGRWLARATATLDSPFGLSDFVSLNANSTLENPAHRYNRAYTLLYSLPYGAFTFSGFASFSSYENHQQLPHNVVKLHGQTQQYGLRSDYVFYRDHDQIDSLSGQLTYKRIDNYFESVRLEVSSPTLTLAELSASHLQILPNGVFSANLSVEQGMPWLGAGRHPSSVHLDSQFTKGKLFANLSQRLRLGDATYQLNNLFYGQYSRDPLPGVEWLSLTDRSAVRGFSRSTQSGDNGWYLQNTLSRSFNLGATTLTPRLGADVGRILPRQDNSGWRSSAGISTGATLRYQRALVDLEVSRGWILSNHATPEDPVQVLARFSYTF</sequence>
<comment type="function">
    <text>Interacts with the cell-bound hemolysin. Necessary for the extracellular secretion and activation of hemolysin.</text>
</comment>
<comment type="function">
    <text>Member of a two partner secretion pathway (TPS) in which it mediates the secretion of hemolysin.</text>
</comment>
<comment type="subcellular location">
    <subcellularLocation>
        <location>Cell outer membrane</location>
    </subcellularLocation>
</comment>
<comment type="domain">
    <text evidence="1">Probably a beta-barrel protein.</text>
</comment>
<comment type="similarity">
    <text evidence="4">Belongs to the TPS (TC 1.B.20) family.</text>
</comment>
<feature type="signal peptide" evidence="3">
    <location>
        <begin position="1"/>
        <end position="18"/>
    </location>
</feature>
<feature type="chain" id="PRO_0000018665" description="Hemolysin transporter protein ShlB">
    <location>
        <begin position="19"/>
        <end position="557"/>
    </location>
</feature>
<feature type="domain" description="POTRA" evidence="2">
    <location>
        <begin position="79"/>
        <end position="152"/>
    </location>
</feature>
<protein>
    <recommendedName>
        <fullName>Hemolysin transporter protein ShlB</fullName>
    </recommendedName>
</protein>
<dbReference type="EMBL" id="M22618">
    <property type="protein sequence ID" value="AAA50322.1"/>
    <property type="molecule type" value="Genomic_DNA"/>
</dbReference>
<dbReference type="PIR" id="B28182">
    <property type="entry name" value="B28182"/>
</dbReference>
<dbReference type="SMR" id="P15321"/>
<dbReference type="STRING" id="273526.SMDB11_3736"/>
<dbReference type="TCDB" id="1.B.20.1.1">
    <property type="family name" value="the two-partner secretion (tps) family"/>
</dbReference>
<dbReference type="GO" id="GO:0009279">
    <property type="term" value="C:cell outer membrane"/>
    <property type="evidence" value="ECO:0007669"/>
    <property type="project" value="UniProtKB-SubCell"/>
</dbReference>
<dbReference type="GO" id="GO:0046930">
    <property type="term" value="C:pore complex"/>
    <property type="evidence" value="ECO:0007669"/>
    <property type="project" value="UniProtKB-KW"/>
</dbReference>
<dbReference type="GO" id="GO:0098046">
    <property type="term" value="C:type V protein secretion system complex"/>
    <property type="evidence" value="ECO:0007669"/>
    <property type="project" value="TreeGrafter"/>
</dbReference>
<dbReference type="GO" id="GO:0015288">
    <property type="term" value="F:porin activity"/>
    <property type="evidence" value="ECO:0007669"/>
    <property type="project" value="UniProtKB-KW"/>
</dbReference>
<dbReference type="GO" id="GO:0008320">
    <property type="term" value="F:protein transmembrane transporter activity"/>
    <property type="evidence" value="ECO:0000315"/>
    <property type="project" value="CACAO"/>
</dbReference>
<dbReference type="GO" id="GO:0031640">
    <property type="term" value="P:killing of cells of another organism"/>
    <property type="evidence" value="ECO:0007669"/>
    <property type="project" value="UniProtKB-KW"/>
</dbReference>
<dbReference type="GO" id="GO:0006811">
    <property type="term" value="P:monoatomic ion transport"/>
    <property type="evidence" value="ECO:0007669"/>
    <property type="project" value="UniProtKB-KW"/>
</dbReference>
<dbReference type="GO" id="GO:0046819">
    <property type="term" value="P:protein secretion by the type V secretion system"/>
    <property type="evidence" value="ECO:0007669"/>
    <property type="project" value="TreeGrafter"/>
</dbReference>
<dbReference type="FunFam" id="2.40.160.50:FF:000009">
    <property type="entry name" value="Putative hemolysin activator protein"/>
    <property type="match status" value="1"/>
</dbReference>
<dbReference type="Gene3D" id="3.10.20.310">
    <property type="entry name" value="membrane protein fhac"/>
    <property type="match status" value="1"/>
</dbReference>
<dbReference type="Gene3D" id="2.40.160.50">
    <property type="entry name" value="membrane protein fhac: a member of the omp85/tpsb transporter family"/>
    <property type="match status" value="1"/>
</dbReference>
<dbReference type="InterPro" id="IPR005565">
    <property type="entry name" value="Hemolysn_activator_HlyB_C"/>
</dbReference>
<dbReference type="InterPro" id="IPR013686">
    <property type="entry name" value="Polypept-transport_assoc_ShlB"/>
</dbReference>
<dbReference type="InterPro" id="IPR034746">
    <property type="entry name" value="POTRA"/>
</dbReference>
<dbReference type="InterPro" id="IPR035251">
    <property type="entry name" value="ShlB_POTRA"/>
</dbReference>
<dbReference type="InterPro" id="IPR027282">
    <property type="entry name" value="TPS"/>
</dbReference>
<dbReference type="InterPro" id="IPR051544">
    <property type="entry name" value="TPS_OM_transporter"/>
</dbReference>
<dbReference type="PANTHER" id="PTHR34597:SF3">
    <property type="entry name" value="OUTER MEMBRANE TRANSPORTER CDIB"/>
    <property type="match status" value="1"/>
</dbReference>
<dbReference type="PANTHER" id="PTHR34597">
    <property type="entry name" value="SLR1661 PROTEIN"/>
    <property type="match status" value="1"/>
</dbReference>
<dbReference type="Pfam" id="PF08479">
    <property type="entry name" value="POTRA_2"/>
    <property type="match status" value="1"/>
</dbReference>
<dbReference type="Pfam" id="PF17287">
    <property type="entry name" value="POTRA_3"/>
    <property type="match status" value="1"/>
</dbReference>
<dbReference type="Pfam" id="PF03865">
    <property type="entry name" value="ShlB"/>
    <property type="match status" value="1"/>
</dbReference>
<dbReference type="PIRSF" id="PIRSF029745">
    <property type="entry name" value="FhaC"/>
    <property type="match status" value="1"/>
</dbReference>
<dbReference type="PROSITE" id="PS51779">
    <property type="entry name" value="POTRA"/>
    <property type="match status" value="1"/>
</dbReference>
<reference key="1">
    <citation type="journal article" date="1988" name="J. Bacteriol.">
        <title>Molecular characterization of the hemolysin determinant of Serratia marcescens.</title>
        <authorList>
            <person name="Poole K."/>
            <person name="Schiebel E."/>
            <person name="Braun V."/>
        </authorList>
    </citation>
    <scope>NUCLEOTIDE SEQUENCE [GENOMIC DNA]</scope>
    <scope>PROTEIN SEQUENCE OF 19-24</scope>
    <source>
        <strain>K38</strain>
        <strain>SN8</strain>
    </source>
</reference>
<keyword id="KW-0998">Cell outer membrane</keyword>
<keyword id="KW-0204">Cytolysis</keyword>
<keyword id="KW-0903">Direct protein sequencing</keyword>
<keyword id="KW-0354">Hemolysis</keyword>
<keyword id="KW-0406">Ion transport</keyword>
<keyword id="KW-0472">Membrane</keyword>
<keyword id="KW-0626">Porin</keyword>
<keyword id="KW-0653">Protein transport</keyword>
<keyword id="KW-0732">Signal</keyword>
<keyword id="KW-0812">Transmembrane</keyword>
<keyword id="KW-1134">Transmembrane beta strand</keyword>
<keyword id="KW-0813">Transport</keyword>
<proteinExistence type="evidence at protein level"/>
<gene>
    <name type="primary">shlB</name>
</gene>
<evidence type="ECO:0000250" key="1"/>
<evidence type="ECO:0000255" key="2">
    <source>
        <dbReference type="PROSITE-ProRule" id="PRU01115"/>
    </source>
</evidence>
<evidence type="ECO:0000269" key="3">
    <source>
    </source>
</evidence>
<evidence type="ECO:0000305" key="4"/>